<organism>
    <name type="scientific">Shewanella baltica (strain OS185)</name>
    <dbReference type="NCBI Taxonomy" id="402882"/>
    <lineage>
        <taxon>Bacteria</taxon>
        <taxon>Pseudomonadati</taxon>
        <taxon>Pseudomonadota</taxon>
        <taxon>Gammaproteobacteria</taxon>
        <taxon>Alteromonadales</taxon>
        <taxon>Shewanellaceae</taxon>
        <taxon>Shewanella</taxon>
    </lineage>
</organism>
<comment type="function">
    <text evidence="1">Catalyzes the formation of a hydroxyacyl-CoA by addition of water on enoyl-CoA. Also exhibits 3-hydroxyacyl-CoA epimerase and 3-hydroxyacyl-CoA dehydrogenase activities.</text>
</comment>
<comment type="catalytic activity">
    <reaction evidence="1">
        <text>a (3S)-3-hydroxyacyl-CoA = a (2E)-enoyl-CoA + H2O</text>
        <dbReference type="Rhea" id="RHEA:16105"/>
        <dbReference type="ChEBI" id="CHEBI:15377"/>
        <dbReference type="ChEBI" id="CHEBI:57318"/>
        <dbReference type="ChEBI" id="CHEBI:58856"/>
        <dbReference type="EC" id="4.2.1.17"/>
    </reaction>
</comment>
<comment type="catalytic activity">
    <reaction evidence="1">
        <text>a 4-saturated-(3S)-3-hydroxyacyl-CoA = a (3E)-enoyl-CoA + H2O</text>
        <dbReference type="Rhea" id="RHEA:20724"/>
        <dbReference type="ChEBI" id="CHEBI:15377"/>
        <dbReference type="ChEBI" id="CHEBI:58521"/>
        <dbReference type="ChEBI" id="CHEBI:137480"/>
        <dbReference type="EC" id="4.2.1.17"/>
    </reaction>
</comment>
<comment type="catalytic activity">
    <reaction evidence="1">
        <text>a (3S)-3-hydroxyacyl-CoA + NAD(+) = a 3-oxoacyl-CoA + NADH + H(+)</text>
        <dbReference type="Rhea" id="RHEA:22432"/>
        <dbReference type="ChEBI" id="CHEBI:15378"/>
        <dbReference type="ChEBI" id="CHEBI:57318"/>
        <dbReference type="ChEBI" id="CHEBI:57540"/>
        <dbReference type="ChEBI" id="CHEBI:57945"/>
        <dbReference type="ChEBI" id="CHEBI:90726"/>
        <dbReference type="EC" id="1.1.1.35"/>
    </reaction>
</comment>
<comment type="catalytic activity">
    <reaction evidence="1">
        <text>(3S)-3-hydroxybutanoyl-CoA = (3R)-3-hydroxybutanoyl-CoA</text>
        <dbReference type="Rhea" id="RHEA:21760"/>
        <dbReference type="ChEBI" id="CHEBI:57315"/>
        <dbReference type="ChEBI" id="CHEBI:57316"/>
        <dbReference type="EC" id="5.1.2.3"/>
    </reaction>
</comment>
<comment type="pathway">
    <text evidence="1">Lipid metabolism; fatty acid beta-oxidation.</text>
</comment>
<comment type="subunit">
    <text evidence="1">Heterotetramer of two alpha chains (FadJ) and two beta chains (FadI).</text>
</comment>
<comment type="subcellular location">
    <subcellularLocation>
        <location evidence="1">Cytoplasm</location>
    </subcellularLocation>
</comment>
<comment type="similarity">
    <text evidence="1">In the N-terminal section; belongs to the enoyl-CoA hydratase/isomerase family.</text>
</comment>
<comment type="similarity">
    <text evidence="1">In the central section; belongs to the 3-hydroxyacyl-CoA dehydrogenase family.</text>
</comment>
<protein>
    <recommendedName>
        <fullName evidence="1">Fatty acid oxidation complex subunit alpha</fullName>
    </recommendedName>
    <domain>
        <recommendedName>
            <fullName evidence="1">Enoyl-CoA hydratase/3-hydroxybutyryl-CoA epimerase</fullName>
            <ecNumber evidence="1">4.2.1.17</ecNumber>
            <ecNumber evidence="1">5.1.2.3</ecNumber>
        </recommendedName>
    </domain>
    <domain>
        <recommendedName>
            <fullName evidence="1">3-hydroxyacyl-CoA dehydrogenase</fullName>
            <ecNumber evidence="1">1.1.1.35</ecNumber>
        </recommendedName>
    </domain>
</protein>
<name>FADJ_SHEB8</name>
<accession>A6WQ25</accession>
<sequence>MEKTFNLTRRDDGIAILTMDVPGETMNTLKAQFGPEISEILAEIKSDSSIRGLVLISGKKDSFVAGADISMLDACKTAGDAKALSQQGHVVFNELEALTIPVVAAIHGACLGGGLELALACHQRVCSDDGKTMLGVPEVQLGLLPGGGGTQRLPRLVGITTALDMMLTGKKIRPKQALKMGLVNDVVPQTILLQTAVEMALAGKRAPKPVKKSLVNQVLEGTSFGRNIIFDQATKQVEKKTQGNYPAPAKIIDCVRQGIAKGMQKGLEVEASHFAELVVSKESEALRSIFFATTEMKKETGAEGASPRKVKKAVILGGGLMGGGIASVTTTKAKIPVRVKDISEKGLSNALAYAYKLLDKGVKRRHMTPAARDNLMALMTTTTEYKGVKDADIVVEAVFEDLALKHQMVKDIERECGEHTIFASNTSSLPISQIAEAATRPENVIGLHYFSPVEKMPLVEVIAHAKTSPETIATTVAFARKQGKTPIVVQDGAGFYVNRILALYMNEAAQLLLEGQSVEHLDKALVKFGFPVGPITLLDEVGIDVGAKISPILEKELGERFKAPAAFDKLLSDDRKGRKNGKGFYQYGASSKKAKAVDESVYGVLGIKPGTNKDAKAVAERCVVQMLNEAVRCLEDGIIASPRDGDIGAIFGIGFPPFLGGPFHYIDTLGAANLVKILESYQSQFGNRFEPCERLKTMAQENAHFF</sequence>
<evidence type="ECO:0000255" key="1">
    <source>
        <dbReference type="HAMAP-Rule" id="MF_01617"/>
    </source>
</evidence>
<proteinExistence type="inferred from homology"/>
<gene>
    <name evidence="1" type="primary">fadJ</name>
    <name type="ordered locus">Shew185_2780</name>
</gene>
<dbReference type="EC" id="4.2.1.17" evidence="1"/>
<dbReference type="EC" id="5.1.2.3" evidence="1"/>
<dbReference type="EC" id="1.1.1.35" evidence="1"/>
<dbReference type="EMBL" id="CP000753">
    <property type="protein sequence ID" value="ABS08914.1"/>
    <property type="molecule type" value="Genomic_DNA"/>
</dbReference>
<dbReference type="RefSeq" id="WP_012089600.1">
    <property type="nucleotide sequence ID" value="NC_009665.1"/>
</dbReference>
<dbReference type="SMR" id="A6WQ25"/>
<dbReference type="KEGG" id="sbm:Shew185_2780"/>
<dbReference type="HOGENOM" id="CLU_009834_16_1_6"/>
<dbReference type="UniPathway" id="UPA00659"/>
<dbReference type="GO" id="GO:0005737">
    <property type="term" value="C:cytoplasm"/>
    <property type="evidence" value="ECO:0007669"/>
    <property type="project" value="UniProtKB-SubCell"/>
</dbReference>
<dbReference type="GO" id="GO:0008692">
    <property type="term" value="F:3-hydroxybutyryl-CoA epimerase activity"/>
    <property type="evidence" value="ECO:0007669"/>
    <property type="project" value="UniProtKB-UniRule"/>
</dbReference>
<dbReference type="GO" id="GO:0004300">
    <property type="term" value="F:enoyl-CoA hydratase activity"/>
    <property type="evidence" value="ECO:0007669"/>
    <property type="project" value="UniProtKB-UniRule"/>
</dbReference>
<dbReference type="GO" id="GO:0016509">
    <property type="term" value="F:long-chain-3-hydroxyacyl-CoA dehydrogenase activity"/>
    <property type="evidence" value="ECO:0007669"/>
    <property type="project" value="TreeGrafter"/>
</dbReference>
<dbReference type="GO" id="GO:0070403">
    <property type="term" value="F:NAD+ binding"/>
    <property type="evidence" value="ECO:0007669"/>
    <property type="project" value="InterPro"/>
</dbReference>
<dbReference type="GO" id="GO:0006635">
    <property type="term" value="P:fatty acid beta-oxidation"/>
    <property type="evidence" value="ECO:0007669"/>
    <property type="project" value="UniProtKB-UniRule"/>
</dbReference>
<dbReference type="CDD" id="cd06558">
    <property type="entry name" value="crotonase-like"/>
    <property type="match status" value="1"/>
</dbReference>
<dbReference type="FunFam" id="1.10.1040.50:FF:000003">
    <property type="entry name" value="Fatty acid oxidation complex subunit alpha"/>
    <property type="match status" value="1"/>
</dbReference>
<dbReference type="FunFam" id="3.90.226.10:FF:000011">
    <property type="entry name" value="Fatty acid oxidation complex subunit alpha"/>
    <property type="match status" value="1"/>
</dbReference>
<dbReference type="FunFam" id="3.40.50.720:FF:000009">
    <property type="entry name" value="Fatty oxidation complex, alpha subunit"/>
    <property type="match status" value="1"/>
</dbReference>
<dbReference type="Gene3D" id="1.10.1040.50">
    <property type="match status" value="1"/>
</dbReference>
<dbReference type="Gene3D" id="3.90.226.10">
    <property type="entry name" value="2-enoyl-CoA Hydratase, Chain A, domain 1"/>
    <property type="match status" value="1"/>
</dbReference>
<dbReference type="Gene3D" id="3.40.50.720">
    <property type="entry name" value="NAD(P)-binding Rossmann-like Domain"/>
    <property type="match status" value="1"/>
</dbReference>
<dbReference type="HAMAP" id="MF_01617">
    <property type="entry name" value="FadJ"/>
    <property type="match status" value="1"/>
</dbReference>
<dbReference type="InterPro" id="IPR006176">
    <property type="entry name" value="3-OHacyl-CoA_DH_NAD-bd"/>
</dbReference>
<dbReference type="InterPro" id="IPR006108">
    <property type="entry name" value="3HC_DH_C"/>
</dbReference>
<dbReference type="InterPro" id="IPR008927">
    <property type="entry name" value="6-PGluconate_DH-like_C_sf"/>
</dbReference>
<dbReference type="InterPro" id="IPR029045">
    <property type="entry name" value="ClpP/crotonase-like_dom_sf"/>
</dbReference>
<dbReference type="InterPro" id="IPR001753">
    <property type="entry name" value="Enoyl-CoA_hydra/iso"/>
</dbReference>
<dbReference type="InterPro" id="IPR050136">
    <property type="entry name" value="FA_oxidation_alpha_subunit"/>
</dbReference>
<dbReference type="InterPro" id="IPR012802">
    <property type="entry name" value="FadJ"/>
</dbReference>
<dbReference type="InterPro" id="IPR036291">
    <property type="entry name" value="NAD(P)-bd_dom_sf"/>
</dbReference>
<dbReference type="NCBIfam" id="TIGR02440">
    <property type="entry name" value="FadJ"/>
    <property type="match status" value="1"/>
</dbReference>
<dbReference type="NCBIfam" id="NF008363">
    <property type="entry name" value="PRK11154.1"/>
    <property type="match status" value="1"/>
</dbReference>
<dbReference type="PANTHER" id="PTHR43612">
    <property type="entry name" value="TRIFUNCTIONAL ENZYME SUBUNIT ALPHA"/>
    <property type="match status" value="1"/>
</dbReference>
<dbReference type="PANTHER" id="PTHR43612:SF3">
    <property type="entry name" value="TRIFUNCTIONAL ENZYME SUBUNIT ALPHA, MITOCHONDRIAL"/>
    <property type="match status" value="1"/>
</dbReference>
<dbReference type="Pfam" id="PF00725">
    <property type="entry name" value="3HCDH"/>
    <property type="match status" value="2"/>
</dbReference>
<dbReference type="Pfam" id="PF02737">
    <property type="entry name" value="3HCDH_N"/>
    <property type="match status" value="1"/>
</dbReference>
<dbReference type="Pfam" id="PF00378">
    <property type="entry name" value="ECH_1"/>
    <property type="match status" value="1"/>
</dbReference>
<dbReference type="SUPFAM" id="SSF48179">
    <property type="entry name" value="6-phosphogluconate dehydrogenase C-terminal domain-like"/>
    <property type="match status" value="2"/>
</dbReference>
<dbReference type="SUPFAM" id="SSF52096">
    <property type="entry name" value="ClpP/crotonase"/>
    <property type="match status" value="1"/>
</dbReference>
<dbReference type="SUPFAM" id="SSF51735">
    <property type="entry name" value="NAD(P)-binding Rossmann-fold domains"/>
    <property type="match status" value="1"/>
</dbReference>
<reference key="1">
    <citation type="submission" date="2007-07" db="EMBL/GenBank/DDBJ databases">
        <title>Complete sequence of chromosome of Shewanella baltica OS185.</title>
        <authorList>
            <consortium name="US DOE Joint Genome Institute"/>
            <person name="Copeland A."/>
            <person name="Lucas S."/>
            <person name="Lapidus A."/>
            <person name="Barry K."/>
            <person name="Glavina del Rio T."/>
            <person name="Dalin E."/>
            <person name="Tice H."/>
            <person name="Pitluck S."/>
            <person name="Sims D."/>
            <person name="Brettin T."/>
            <person name="Bruce D."/>
            <person name="Detter J.C."/>
            <person name="Han C."/>
            <person name="Schmutz J."/>
            <person name="Larimer F."/>
            <person name="Land M."/>
            <person name="Hauser L."/>
            <person name="Kyrpides N."/>
            <person name="Mikhailova N."/>
            <person name="Brettar I."/>
            <person name="Rodrigues J."/>
            <person name="Konstantinidis K."/>
            <person name="Tiedje J."/>
            <person name="Richardson P."/>
        </authorList>
    </citation>
    <scope>NUCLEOTIDE SEQUENCE [LARGE SCALE GENOMIC DNA]</scope>
    <source>
        <strain>OS185</strain>
    </source>
</reference>
<feature type="chain" id="PRO_0000323527" description="Fatty acid oxidation complex subunit alpha">
    <location>
        <begin position="1"/>
        <end position="706"/>
    </location>
</feature>
<feature type="region of interest" description="Enoyl-CoA hydratase" evidence="1">
    <location>
        <begin position="1"/>
        <end position="188"/>
    </location>
</feature>
<feature type="region of interest" description="3-hydroxyacyl-CoA dehydrogenase" evidence="1">
    <location>
        <begin position="308"/>
        <end position="706"/>
    </location>
</feature>
<feature type="site" description="Important for catalytic activity" evidence="1">
    <location>
        <position position="116"/>
    </location>
</feature>
<feature type="site" description="Important for catalytic activity" evidence="1">
    <location>
        <position position="138"/>
    </location>
</feature>
<keyword id="KW-0963">Cytoplasm</keyword>
<keyword id="KW-0276">Fatty acid metabolism</keyword>
<keyword id="KW-0413">Isomerase</keyword>
<keyword id="KW-0442">Lipid degradation</keyword>
<keyword id="KW-0443">Lipid metabolism</keyword>
<keyword id="KW-0456">Lyase</keyword>
<keyword id="KW-0511">Multifunctional enzyme</keyword>
<keyword id="KW-0520">NAD</keyword>
<keyword id="KW-0560">Oxidoreductase</keyword>